<sequence>MLIAIEGVDGAGKRTLVEKLSGAFRAAGRSVATLAFPRYGQSVAADIAAEALHGEHGDLASSVYAMATLFALDRAGAVHTIQGLCRGYDVVILDRYVASNAAYSAARLHENAAGKAAAWVQRIEFARLGLPKPDWQVLLAVSAELAGERSRGRAQRDPGRARDNYERDAELQQRTGAVYAELAAQGWGGRWLVVGADVDPGRLAATLAPPDVPS</sequence>
<comment type="function">
    <text evidence="1">Catalyzes the reversible phosphorylation of deoxythymidine monophosphate (dTMP) to deoxythymidine diphosphate (dTDP), using ATP as its preferred phosphoryl donor. Situated at the junction of both de novo and salvage pathways of deoxythymidine triphosphate (dTTP) synthesis, is essential for DNA synthesis and cellular growth (By similarity).</text>
</comment>
<comment type="catalytic activity">
    <reaction>
        <text>dTMP + ATP = dTDP + ADP</text>
        <dbReference type="Rhea" id="RHEA:13517"/>
        <dbReference type="ChEBI" id="CHEBI:30616"/>
        <dbReference type="ChEBI" id="CHEBI:58369"/>
        <dbReference type="ChEBI" id="CHEBI:63528"/>
        <dbReference type="ChEBI" id="CHEBI:456216"/>
        <dbReference type="EC" id="2.7.4.9"/>
    </reaction>
</comment>
<comment type="cofactor">
    <cofactor evidence="1">
        <name>Mg(2+)</name>
        <dbReference type="ChEBI" id="CHEBI:18420"/>
    </cofactor>
    <text evidence="1">Binds 1 Mg(2+) ion per subunit. This ion is required for catalysis, binding to the active site transiently (at the TMP-binding site), and probably acting as a clamp between the phosphoryl donor and acceptor.</text>
</comment>
<comment type="pathway">
    <text>Pyrimidine metabolism; dTTP biosynthesis.</text>
</comment>
<comment type="subunit">
    <text evidence="1">Homodimer.</text>
</comment>
<comment type="similarity">
    <text evidence="3">Belongs to the thymidylate kinase family.</text>
</comment>
<organism>
    <name type="scientific">Mycobacterium tuberculosis (strain CDC 1551 / Oshkosh)</name>
    <dbReference type="NCBI Taxonomy" id="83331"/>
    <lineage>
        <taxon>Bacteria</taxon>
        <taxon>Bacillati</taxon>
        <taxon>Actinomycetota</taxon>
        <taxon>Actinomycetes</taxon>
        <taxon>Mycobacteriales</taxon>
        <taxon>Mycobacteriaceae</taxon>
        <taxon>Mycobacterium</taxon>
        <taxon>Mycobacterium tuberculosis complex</taxon>
    </lineage>
</organism>
<dbReference type="EC" id="2.7.4.9"/>
<dbReference type="EMBL" id="AE000516">
    <property type="protein sequence ID" value="AAK47687.1"/>
    <property type="molecule type" value="Genomic_DNA"/>
</dbReference>
<dbReference type="PIR" id="A70593">
    <property type="entry name" value="A70593"/>
</dbReference>
<dbReference type="SMR" id="P9WKE0"/>
<dbReference type="KEGG" id="mtc:MT3345"/>
<dbReference type="PATRIC" id="fig|83331.31.peg.3601"/>
<dbReference type="HOGENOM" id="CLU_049131_1_0_11"/>
<dbReference type="UniPathway" id="UPA00575"/>
<dbReference type="Proteomes" id="UP000001020">
    <property type="component" value="Chromosome"/>
</dbReference>
<dbReference type="GO" id="GO:0005829">
    <property type="term" value="C:cytosol"/>
    <property type="evidence" value="ECO:0007669"/>
    <property type="project" value="TreeGrafter"/>
</dbReference>
<dbReference type="GO" id="GO:0005524">
    <property type="term" value="F:ATP binding"/>
    <property type="evidence" value="ECO:0007669"/>
    <property type="project" value="UniProtKB-UniRule"/>
</dbReference>
<dbReference type="GO" id="GO:0004798">
    <property type="term" value="F:dTMP kinase activity"/>
    <property type="evidence" value="ECO:0007669"/>
    <property type="project" value="UniProtKB-UniRule"/>
</dbReference>
<dbReference type="GO" id="GO:0046872">
    <property type="term" value="F:metal ion binding"/>
    <property type="evidence" value="ECO:0007669"/>
    <property type="project" value="UniProtKB-KW"/>
</dbReference>
<dbReference type="GO" id="GO:0006233">
    <property type="term" value="P:dTDP biosynthetic process"/>
    <property type="evidence" value="ECO:0007669"/>
    <property type="project" value="InterPro"/>
</dbReference>
<dbReference type="GO" id="GO:0006235">
    <property type="term" value="P:dTTP biosynthetic process"/>
    <property type="evidence" value="ECO:0007669"/>
    <property type="project" value="UniProtKB-UniRule"/>
</dbReference>
<dbReference type="GO" id="GO:0006227">
    <property type="term" value="P:dUDP biosynthetic process"/>
    <property type="evidence" value="ECO:0007669"/>
    <property type="project" value="TreeGrafter"/>
</dbReference>
<dbReference type="CDD" id="cd01672">
    <property type="entry name" value="TMPK"/>
    <property type="match status" value="1"/>
</dbReference>
<dbReference type="Gene3D" id="3.40.50.300">
    <property type="entry name" value="P-loop containing nucleotide triphosphate hydrolases"/>
    <property type="match status" value="1"/>
</dbReference>
<dbReference type="HAMAP" id="MF_00165">
    <property type="entry name" value="Thymidylate_kinase"/>
    <property type="match status" value="1"/>
</dbReference>
<dbReference type="InterPro" id="IPR027417">
    <property type="entry name" value="P-loop_NTPase"/>
</dbReference>
<dbReference type="InterPro" id="IPR039430">
    <property type="entry name" value="Thymidylate_kin-like_dom"/>
</dbReference>
<dbReference type="InterPro" id="IPR018095">
    <property type="entry name" value="Thymidylate_kin_CS"/>
</dbReference>
<dbReference type="InterPro" id="IPR018094">
    <property type="entry name" value="Thymidylate_kinase"/>
</dbReference>
<dbReference type="NCBIfam" id="NF005923">
    <property type="entry name" value="PRK07933.1"/>
    <property type="match status" value="1"/>
</dbReference>
<dbReference type="PANTHER" id="PTHR10344">
    <property type="entry name" value="THYMIDYLATE KINASE"/>
    <property type="match status" value="1"/>
</dbReference>
<dbReference type="PANTHER" id="PTHR10344:SF4">
    <property type="entry name" value="UMP-CMP KINASE 2, MITOCHONDRIAL"/>
    <property type="match status" value="1"/>
</dbReference>
<dbReference type="Pfam" id="PF02223">
    <property type="entry name" value="Thymidylate_kin"/>
    <property type="match status" value="1"/>
</dbReference>
<dbReference type="SUPFAM" id="SSF52540">
    <property type="entry name" value="P-loop containing nucleoside triphosphate hydrolases"/>
    <property type="match status" value="1"/>
</dbReference>
<dbReference type="PROSITE" id="PS01331">
    <property type="entry name" value="THYMIDYLATE_KINASE"/>
    <property type="match status" value="1"/>
</dbReference>
<reference key="1">
    <citation type="journal article" date="2002" name="J. Bacteriol.">
        <title>Whole-genome comparison of Mycobacterium tuberculosis clinical and laboratory strains.</title>
        <authorList>
            <person name="Fleischmann R.D."/>
            <person name="Alland D."/>
            <person name="Eisen J.A."/>
            <person name="Carpenter L."/>
            <person name="White O."/>
            <person name="Peterson J.D."/>
            <person name="DeBoy R.T."/>
            <person name="Dodson R.J."/>
            <person name="Gwinn M.L."/>
            <person name="Haft D.H."/>
            <person name="Hickey E.K."/>
            <person name="Kolonay J.F."/>
            <person name="Nelson W.C."/>
            <person name="Umayam L.A."/>
            <person name="Ermolaeva M.D."/>
            <person name="Salzberg S.L."/>
            <person name="Delcher A."/>
            <person name="Utterback T.R."/>
            <person name="Weidman J.F."/>
            <person name="Khouri H.M."/>
            <person name="Gill J."/>
            <person name="Mikula A."/>
            <person name="Bishai W."/>
            <person name="Jacobs W.R. Jr."/>
            <person name="Venter J.C."/>
            <person name="Fraser C.M."/>
        </authorList>
    </citation>
    <scope>NUCLEOTIDE SEQUENCE [LARGE SCALE GENOMIC DNA]</scope>
    <source>
        <strain>CDC 1551 / Oshkosh</strain>
    </source>
</reference>
<proteinExistence type="inferred from homology"/>
<keyword id="KW-0067">ATP-binding</keyword>
<keyword id="KW-0418">Kinase</keyword>
<keyword id="KW-0460">Magnesium</keyword>
<keyword id="KW-0479">Metal-binding</keyword>
<keyword id="KW-0545">Nucleotide biosynthesis</keyword>
<keyword id="KW-0547">Nucleotide-binding</keyword>
<keyword id="KW-1185">Reference proteome</keyword>
<keyword id="KW-0808">Transferase</keyword>
<protein>
    <recommendedName>
        <fullName>Thymidylate kinase</fullName>
        <ecNumber>2.7.4.9</ecNumber>
    </recommendedName>
    <alternativeName>
        <fullName>Thymidine monophosphate kinase</fullName>
    </alternativeName>
    <alternativeName>
        <fullName>dTMP kinase</fullName>
        <shortName>TMPK</shortName>
    </alternativeName>
</protein>
<feature type="chain" id="PRO_0000427670" description="Thymidylate kinase">
    <location>
        <begin position="1"/>
        <end position="214"/>
    </location>
</feature>
<feature type="region of interest" description="LID" evidence="1">
    <location>
        <begin position="147"/>
        <end position="159"/>
    </location>
</feature>
<feature type="binding site" evidence="1">
    <location>
        <begin position="7"/>
        <end position="14"/>
    </location>
    <ligand>
        <name>ATP</name>
        <dbReference type="ChEBI" id="CHEBI:30616"/>
    </ligand>
</feature>
<feature type="binding site" evidence="1">
    <location>
        <position position="9"/>
    </location>
    <ligand>
        <name>dTMP</name>
        <dbReference type="ChEBI" id="CHEBI:63528"/>
    </ligand>
</feature>
<feature type="binding site" evidence="1">
    <location>
        <position position="9"/>
    </location>
    <ligand>
        <name>Mg(2+)</name>
        <dbReference type="ChEBI" id="CHEBI:18420"/>
    </ligand>
</feature>
<feature type="binding site" evidence="1">
    <location>
        <position position="39"/>
    </location>
    <ligand>
        <name>dTMP</name>
        <dbReference type="ChEBI" id="CHEBI:63528"/>
    </ligand>
</feature>
<feature type="binding site" evidence="1">
    <location>
        <position position="70"/>
    </location>
    <ligand>
        <name>dTMP</name>
        <dbReference type="ChEBI" id="CHEBI:63528"/>
    </ligand>
</feature>
<feature type="binding site" evidence="1">
    <location>
        <position position="74"/>
    </location>
    <ligand>
        <name>dTMP</name>
        <dbReference type="ChEBI" id="CHEBI:63528"/>
    </ligand>
</feature>
<feature type="binding site" evidence="1">
    <location>
        <position position="95"/>
    </location>
    <ligand>
        <name>dTMP</name>
        <dbReference type="ChEBI" id="CHEBI:63528"/>
    </ligand>
</feature>
<feature type="binding site" evidence="1">
    <location>
        <position position="100"/>
    </location>
    <ligand>
        <name>dTMP</name>
        <dbReference type="ChEBI" id="CHEBI:63528"/>
    </ligand>
</feature>
<feature type="binding site" evidence="1">
    <location>
        <position position="103"/>
    </location>
    <ligand>
        <name>dTMP</name>
        <dbReference type="ChEBI" id="CHEBI:63528"/>
    </ligand>
</feature>
<feature type="binding site" evidence="1">
    <location>
        <position position="163"/>
    </location>
    <ligand>
        <name>dTMP</name>
        <dbReference type="ChEBI" id="CHEBI:63528"/>
    </ligand>
</feature>
<feature type="binding site" evidence="1">
    <location>
        <position position="165"/>
    </location>
    <ligand>
        <name>dTMP</name>
        <dbReference type="ChEBI" id="CHEBI:63528"/>
    </ligand>
</feature>
<feature type="binding site" evidence="1">
    <location>
        <position position="166"/>
    </location>
    <ligand>
        <name>Mg(2+)</name>
        <dbReference type="ChEBI" id="CHEBI:18420"/>
    </ligand>
</feature>
<feature type="site" description="Transition state stabilizer" evidence="2">
    <location>
        <position position="153"/>
    </location>
</feature>
<gene>
    <name type="primary">tmk</name>
    <name type="ordered locus">MT3345</name>
</gene>
<evidence type="ECO:0000250" key="1"/>
<evidence type="ECO:0000255" key="2"/>
<evidence type="ECO:0000305" key="3"/>
<name>KTHY_MYCTO</name>
<accession>P9WKE0</accession>
<accession>L0TDK8</accession>
<accession>O05891</accession>
<accession>Q7D5U8</accession>